<evidence type="ECO:0000255" key="1">
    <source>
        <dbReference type="HAMAP-Rule" id="MF_01069"/>
    </source>
</evidence>
<proteinExistence type="inferred from homology"/>
<accession>B1LIW2</accession>
<feature type="signal peptide" evidence="1">
    <location>
        <begin position="1"/>
        <end position="28"/>
    </location>
</feature>
<feature type="chain" id="PRO_1000136614" description="Glucans biosynthesis protein G">
    <location>
        <begin position="29"/>
        <end position="517"/>
    </location>
</feature>
<dbReference type="EMBL" id="CP000970">
    <property type="protein sequence ID" value="ACB18269.1"/>
    <property type="molecule type" value="Genomic_DNA"/>
</dbReference>
<dbReference type="SMR" id="B1LIW2"/>
<dbReference type="KEGG" id="ecm:EcSMS35_2081"/>
<dbReference type="HOGENOM" id="CLU_023403_2_0_6"/>
<dbReference type="UniPathway" id="UPA00637"/>
<dbReference type="Proteomes" id="UP000007011">
    <property type="component" value="Chromosome"/>
</dbReference>
<dbReference type="GO" id="GO:0030288">
    <property type="term" value="C:outer membrane-bounded periplasmic space"/>
    <property type="evidence" value="ECO:0007669"/>
    <property type="project" value="TreeGrafter"/>
</dbReference>
<dbReference type="GO" id="GO:0030246">
    <property type="term" value="F:carbohydrate binding"/>
    <property type="evidence" value="ECO:0007669"/>
    <property type="project" value="InterPro"/>
</dbReference>
<dbReference type="GO" id="GO:0003824">
    <property type="term" value="F:catalytic activity"/>
    <property type="evidence" value="ECO:0007669"/>
    <property type="project" value="InterPro"/>
</dbReference>
<dbReference type="GO" id="GO:0051274">
    <property type="term" value="P:beta-glucan biosynthetic process"/>
    <property type="evidence" value="ECO:0007669"/>
    <property type="project" value="TreeGrafter"/>
</dbReference>
<dbReference type="FunFam" id="2.60.40.10:FF:000294">
    <property type="entry name" value="Glucans biosynthesis protein G"/>
    <property type="match status" value="1"/>
</dbReference>
<dbReference type="FunFam" id="2.70.98.10:FF:000001">
    <property type="entry name" value="Glucans biosynthesis protein G"/>
    <property type="match status" value="1"/>
</dbReference>
<dbReference type="Gene3D" id="2.70.98.10">
    <property type="match status" value="1"/>
</dbReference>
<dbReference type="Gene3D" id="2.60.40.10">
    <property type="entry name" value="Immunoglobulins"/>
    <property type="match status" value="1"/>
</dbReference>
<dbReference type="HAMAP" id="MF_01069">
    <property type="entry name" value="MdoG_OpgG"/>
    <property type="match status" value="1"/>
</dbReference>
<dbReference type="InterPro" id="IPR011013">
    <property type="entry name" value="Gal_mutarotase_sf_dom"/>
</dbReference>
<dbReference type="InterPro" id="IPR014718">
    <property type="entry name" value="GH-type_carb-bd"/>
</dbReference>
<dbReference type="InterPro" id="IPR014438">
    <property type="entry name" value="Glucan_biosyn_MdoG/MdoD"/>
</dbReference>
<dbReference type="InterPro" id="IPR007444">
    <property type="entry name" value="Glucan_biosyn_MdoG_C"/>
</dbReference>
<dbReference type="InterPro" id="IPR013783">
    <property type="entry name" value="Ig-like_fold"/>
</dbReference>
<dbReference type="InterPro" id="IPR014756">
    <property type="entry name" value="Ig_E-set"/>
</dbReference>
<dbReference type="InterPro" id="IPR023704">
    <property type="entry name" value="MdoG_OpgG"/>
</dbReference>
<dbReference type="PANTHER" id="PTHR30504">
    <property type="entry name" value="GLUCANS BIOSYNTHESIS PROTEIN"/>
    <property type="match status" value="1"/>
</dbReference>
<dbReference type="PANTHER" id="PTHR30504:SF4">
    <property type="entry name" value="GLUCANS BIOSYNTHESIS PROTEIN G"/>
    <property type="match status" value="1"/>
</dbReference>
<dbReference type="Pfam" id="PF04349">
    <property type="entry name" value="MdoG"/>
    <property type="match status" value="1"/>
</dbReference>
<dbReference type="PIRSF" id="PIRSF006281">
    <property type="entry name" value="MdoG"/>
    <property type="match status" value="1"/>
</dbReference>
<dbReference type="SUPFAM" id="SSF81296">
    <property type="entry name" value="E set domains"/>
    <property type="match status" value="1"/>
</dbReference>
<dbReference type="SUPFAM" id="SSF74650">
    <property type="entry name" value="Galactose mutarotase-like"/>
    <property type="match status" value="1"/>
</dbReference>
<sequence>MKHKLQMMKMRWLSAAVMLTLYTSSSWAFSIDDVAKQAQSLAGKGYEAPKSNLPSVFRDMKYADYQQIQFNHDKAYWNNLKTPFKLEFYHQGMYFDTPVKINEVTATAVKRIKYSPDYFTFGDVQHDKDTVKDLGFAGFKVLYPINSKDKNDEIVSMLGASYFRVIGAGQVYGLSARGLAIDTALPSGEEFPRFKEFWIERPKPTDKRLTIYALLDSPRATGAYKFVVMPGRDTVVDVQSKIYLRDKVGKLGVAPLTSMFLFGPNQPSPANNYRPELHDSNGLSIHAGNGEWIWRPLNNPKHLAVSSFSMENPQGFGLLQRGRDFSRFEDLDDRYDLRPSAWVTPKGEWGKGSVELVEIPTNDETNDNIVAYWTPDQLPEPGKEMNFKYTITFSRDEDKLHAPDNAWVQQTRRSTGDVKQSNLIRQPDGTIAFVVDFTGAEMKKLPEDTPVTAQTSIGDNGEIVESTVRYNPVTKGWRLVMRVKVKDAKKTTEMRAALVNADQTLSETWSYQLPANE</sequence>
<name>OPGG_ECOSM</name>
<keyword id="KW-0574">Periplasm</keyword>
<keyword id="KW-0732">Signal</keyword>
<gene>
    <name evidence="1" type="primary">mdoG</name>
    <name evidence="1" type="synonym">opgG</name>
    <name type="ordered locus">EcSMS35_2081</name>
</gene>
<protein>
    <recommendedName>
        <fullName evidence="1">Glucans biosynthesis protein G</fullName>
    </recommendedName>
</protein>
<reference key="1">
    <citation type="journal article" date="2008" name="J. Bacteriol.">
        <title>Insights into the environmental resistance gene pool from the genome sequence of the multidrug-resistant environmental isolate Escherichia coli SMS-3-5.</title>
        <authorList>
            <person name="Fricke W.F."/>
            <person name="Wright M.S."/>
            <person name="Lindell A.H."/>
            <person name="Harkins D.M."/>
            <person name="Baker-Austin C."/>
            <person name="Ravel J."/>
            <person name="Stepanauskas R."/>
        </authorList>
    </citation>
    <scope>NUCLEOTIDE SEQUENCE [LARGE SCALE GENOMIC DNA]</scope>
    <source>
        <strain>SMS-3-5 / SECEC</strain>
    </source>
</reference>
<organism>
    <name type="scientific">Escherichia coli (strain SMS-3-5 / SECEC)</name>
    <dbReference type="NCBI Taxonomy" id="439855"/>
    <lineage>
        <taxon>Bacteria</taxon>
        <taxon>Pseudomonadati</taxon>
        <taxon>Pseudomonadota</taxon>
        <taxon>Gammaproteobacteria</taxon>
        <taxon>Enterobacterales</taxon>
        <taxon>Enterobacteriaceae</taxon>
        <taxon>Escherichia</taxon>
    </lineage>
</organism>
<comment type="function">
    <text evidence="1">Involved in the biosynthesis of osmoregulated periplasmic glucans (OPGs).</text>
</comment>
<comment type="pathway">
    <text evidence="1">Glycan metabolism; osmoregulated periplasmic glucan (OPG) biosynthesis.</text>
</comment>
<comment type="subcellular location">
    <subcellularLocation>
        <location evidence="1">Periplasm</location>
    </subcellularLocation>
</comment>
<comment type="similarity">
    <text evidence="1">Belongs to the OpgD/OpgG family.</text>
</comment>